<organism>
    <name type="scientific">Mycobacterium sp. (strain MCS)</name>
    <dbReference type="NCBI Taxonomy" id="164756"/>
    <lineage>
        <taxon>Bacteria</taxon>
        <taxon>Bacillati</taxon>
        <taxon>Actinomycetota</taxon>
        <taxon>Actinomycetes</taxon>
        <taxon>Mycobacteriales</taxon>
        <taxon>Mycobacteriaceae</taxon>
        <taxon>Mycobacterium</taxon>
    </lineage>
</organism>
<gene>
    <name evidence="1" type="primary">mshA</name>
    <name type="ordered locus">Mmcs_0657</name>
</gene>
<name>MSHA_MYCSS</name>
<evidence type="ECO:0000255" key="1">
    <source>
        <dbReference type="HAMAP-Rule" id="MF_01695"/>
    </source>
</evidence>
<keyword id="KW-0328">Glycosyltransferase</keyword>
<keyword id="KW-0460">Magnesium</keyword>
<keyword id="KW-0479">Metal-binding</keyword>
<keyword id="KW-0808">Transferase</keyword>
<protein>
    <recommendedName>
        <fullName>D-inositol 3-phosphate glycosyltransferase</fullName>
        <ecNumber evidence="1">2.4.1.250</ecNumber>
    </recommendedName>
    <alternativeName>
        <fullName evidence="1">N-acetylglucosamine-inositol-phosphate N-acetylglucosaminyltransferase</fullName>
        <shortName evidence="1">GlcNAc-Ins-P N-acetylglucosaminyltransferase</shortName>
    </alternativeName>
</protein>
<dbReference type="EC" id="2.4.1.250" evidence="1"/>
<dbReference type="EMBL" id="CP000384">
    <property type="protein sequence ID" value="ABG06778.1"/>
    <property type="molecule type" value="Genomic_DNA"/>
</dbReference>
<dbReference type="SMR" id="Q1BEA6"/>
<dbReference type="CAZy" id="GT4">
    <property type="family name" value="Glycosyltransferase Family 4"/>
</dbReference>
<dbReference type="KEGG" id="mmc:Mmcs_0657"/>
<dbReference type="HOGENOM" id="CLU_009583_2_3_11"/>
<dbReference type="BioCyc" id="MSP164756:G1G6O-671-MONOMER"/>
<dbReference type="GO" id="GO:0008375">
    <property type="term" value="F:acetylglucosaminyltransferase activity"/>
    <property type="evidence" value="ECO:0007669"/>
    <property type="project" value="UniProtKB-UniRule"/>
</dbReference>
<dbReference type="GO" id="GO:0102710">
    <property type="term" value="F:D-inositol-3-phosphate glycosyltransferase activity"/>
    <property type="evidence" value="ECO:0007669"/>
    <property type="project" value="UniProtKB-EC"/>
</dbReference>
<dbReference type="GO" id="GO:0000287">
    <property type="term" value="F:magnesium ion binding"/>
    <property type="evidence" value="ECO:0007669"/>
    <property type="project" value="UniProtKB-UniRule"/>
</dbReference>
<dbReference type="GO" id="GO:0010125">
    <property type="term" value="P:mycothiol biosynthetic process"/>
    <property type="evidence" value="ECO:0007669"/>
    <property type="project" value="UniProtKB-UniRule"/>
</dbReference>
<dbReference type="CDD" id="cd03800">
    <property type="entry name" value="GT4_sucrose_synthase"/>
    <property type="match status" value="1"/>
</dbReference>
<dbReference type="FunFam" id="3.40.50.2000:FF:000123">
    <property type="entry name" value="D-inositol-3-phosphate glycosyltransferase"/>
    <property type="match status" value="1"/>
</dbReference>
<dbReference type="Gene3D" id="3.40.50.2000">
    <property type="entry name" value="Glycogen Phosphorylase B"/>
    <property type="match status" value="2"/>
</dbReference>
<dbReference type="HAMAP" id="MF_01695">
    <property type="entry name" value="MshA"/>
    <property type="match status" value="1"/>
</dbReference>
<dbReference type="InterPro" id="IPR001296">
    <property type="entry name" value="Glyco_trans_1"/>
</dbReference>
<dbReference type="InterPro" id="IPR028098">
    <property type="entry name" value="Glyco_trans_4-like_N"/>
</dbReference>
<dbReference type="InterPro" id="IPR017814">
    <property type="entry name" value="Mycothiol_biosynthesis_MshA"/>
</dbReference>
<dbReference type="NCBIfam" id="TIGR03449">
    <property type="entry name" value="mycothiol_MshA"/>
    <property type="match status" value="1"/>
</dbReference>
<dbReference type="PANTHER" id="PTHR12526:SF510">
    <property type="entry name" value="D-INOSITOL 3-PHOSPHATE GLYCOSYLTRANSFERASE"/>
    <property type="match status" value="1"/>
</dbReference>
<dbReference type="PANTHER" id="PTHR12526">
    <property type="entry name" value="GLYCOSYLTRANSFERASE"/>
    <property type="match status" value="1"/>
</dbReference>
<dbReference type="Pfam" id="PF13579">
    <property type="entry name" value="Glyco_trans_4_4"/>
    <property type="match status" value="1"/>
</dbReference>
<dbReference type="Pfam" id="PF00534">
    <property type="entry name" value="Glycos_transf_1"/>
    <property type="match status" value="1"/>
</dbReference>
<dbReference type="SUPFAM" id="SSF53756">
    <property type="entry name" value="UDP-Glycosyltransferase/glycogen phosphorylase"/>
    <property type="match status" value="1"/>
</dbReference>
<sequence>MRLATDQLGRPPQRVAVLSVHTSPLAQPGTGDAGGMNVYVLQSALHMARRGVEVEIFTRATTSADPPVVRVAPGVLVRNVVAGPFEGLDKYDLPTQLCAFTAGVLRAEATHEPGYYDIVHSHYWLSGQVGWLARDRWAVPLVHTAHTLAAVKNAALAEGDSPEPPLRAVGEQQVVDEADRLIVNTELEAEQLVSLHNADPSRIDVVHPGVDLDTFTPGDRAAARAALGLDPRETVVAFVGRIQPLKAPDILLRAAAKLPDVRVLVAGGPSGSGLAAPDNLVALADELGISERVTFLPPQSREDLVRVYRAADLVAVPSYSESFGLVAVEAQACGTPVVAAAVGGLPVAVRDGVTGALVDGHDVGDWAHTIDSLLSRGPATMRRAAVEHAATFSWAHTVDDLLASYGRAISDYRDRHPHADETLSRRTARRFSRRRGVRA</sequence>
<comment type="function">
    <text evidence="1">Catalyzes the transfer of a N-acetyl-glucosamine moiety to 1D-myo-inositol 3-phosphate to produce 1D-myo-inositol 2-acetamido-2-deoxy-glucopyranoside 3-phosphate in the mycothiol biosynthesis pathway.</text>
</comment>
<comment type="catalytic activity">
    <reaction evidence="1">
        <text>1D-myo-inositol 3-phosphate + UDP-N-acetyl-alpha-D-glucosamine = 1D-myo-inositol 2-acetamido-2-deoxy-alpha-D-glucopyranoside 3-phosphate + UDP + H(+)</text>
        <dbReference type="Rhea" id="RHEA:26188"/>
        <dbReference type="ChEBI" id="CHEBI:15378"/>
        <dbReference type="ChEBI" id="CHEBI:57705"/>
        <dbReference type="ChEBI" id="CHEBI:58223"/>
        <dbReference type="ChEBI" id="CHEBI:58401"/>
        <dbReference type="ChEBI" id="CHEBI:58892"/>
        <dbReference type="EC" id="2.4.1.250"/>
    </reaction>
</comment>
<comment type="subunit">
    <text evidence="1">Homodimer.</text>
</comment>
<comment type="similarity">
    <text evidence="1">Belongs to the glycosyltransferase group 1 family. MshA subfamily.</text>
</comment>
<accession>Q1BEA6</accession>
<proteinExistence type="inferred from homology"/>
<feature type="chain" id="PRO_0000400140" description="D-inositol 3-phosphate glycosyltransferase">
    <location>
        <begin position="1"/>
        <end position="439"/>
    </location>
</feature>
<feature type="binding site" evidence="1">
    <location>
        <position position="21"/>
    </location>
    <ligand>
        <name>1D-myo-inositol 3-phosphate</name>
        <dbReference type="ChEBI" id="CHEBI:58401"/>
    </ligand>
</feature>
<feature type="binding site" evidence="1">
    <location>
        <begin position="27"/>
        <end position="28"/>
    </location>
    <ligand>
        <name>UDP-N-acetyl-alpha-D-glucosamine</name>
        <dbReference type="ChEBI" id="CHEBI:57705"/>
    </ligand>
</feature>
<feature type="binding site" evidence="1">
    <location>
        <begin position="32"/>
        <end position="37"/>
    </location>
    <ligand>
        <name>1D-myo-inositol 3-phosphate</name>
        <dbReference type="ChEBI" id="CHEBI:58401"/>
    </ligand>
</feature>
<feature type="binding site" evidence="1">
    <location>
        <position position="35"/>
    </location>
    <ligand>
        <name>UDP-N-acetyl-alpha-D-glucosamine</name>
        <dbReference type="ChEBI" id="CHEBI:57705"/>
    </ligand>
</feature>
<feature type="binding site" evidence="1">
    <location>
        <position position="90"/>
    </location>
    <ligand>
        <name>1D-myo-inositol 3-phosphate</name>
        <dbReference type="ChEBI" id="CHEBI:58401"/>
    </ligand>
</feature>
<feature type="binding site" evidence="1">
    <location>
        <position position="123"/>
    </location>
    <ligand>
        <name>1D-myo-inositol 3-phosphate</name>
        <dbReference type="ChEBI" id="CHEBI:58401"/>
    </ligand>
</feature>
<feature type="binding site" evidence="1">
    <location>
        <position position="147"/>
    </location>
    <ligand>
        <name>1D-myo-inositol 3-phosphate</name>
        <dbReference type="ChEBI" id="CHEBI:58401"/>
    </ligand>
</feature>
<feature type="binding site" evidence="1">
    <location>
        <position position="167"/>
    </location>
    <ligand>
        <name>1D-myo-inositol 3-phosphate</name>
        <dbReference type="ChEBI" id="CHEBI:58401"/>
    </ligand>
</feature>
<feature type="binding site" evidence="1">
    <location>
        <position position="241"/>
    </location>
    <ligand>
        <name>UDP-N-acetyl-alpha-D-glucosamine</name>
        <dbReference type="ChEBI" id="CHEBI:57705"/>
    </ligand>
</feature>
<feature type="binding site" evidence="1">
    <location>
        <position position="246"/>
    </location>
    <ligand>
        <name>UDP-N-acetyl-alpha-D-glucosamine</name>
        <dbReference type="ChEBI" id="CHEBI:57705"/>
    </ligand>
</feature>
<feature type="binding site" evidence="1">
    <location>
        <position position="299"/>
    </location>
    <ligand>
        <name>UDP-N-acetyl-alpha-D-glucosamine</name>
        <dbReference type="ChEBI" id="CHEBI:57705"/>
    </ligand>
</feature>
<feature type="binding site" evidence="1">
    <location>
        <position position="308"/>
    </location>
    <ligand>
        <name>Mg(2+)</name>
        <dbReference type="ChEBI" id="CHEBI:18420"/>
    </ligand>
</feature>
<feature type="binding site" evidence="1">
    <location>
        <position position="309"/>
    </location>
    <ligand>
        <name>Mg(2+)</name>
        <dbReference type="ChEBI" id="CHEBI:18420"/>
    </ligand>
</feature>
<feature type="binding site" evidence="1">
    <location>
        <position position="311"/>
    </location>
    <ligand>
        <name>Mg(2+)</name>
        <dbReference type="ChEBI" id="CHEBI:18420"/>
    </ligand>
</feature>
<feature type="binding site" evidence="1">
    <location>
        <position position="321"/>
    </location>
    <ligand>
        <name>UDP-N-acetyl-alpha-D-glucosamine</name>
        <dbReference type="ChEBI" id="CHEBI:57705"/>
    </ligand>
</feature>
<feature type="binding site" evidence="1">
    <location>
        <position position="329"/>
    </location>
    <ligand>
        <name>UDP-N-acetyl-alpha-D-glucosamine</name>
        <dbReference type="ChEBI" id="CHEBI:57705"/>
    </ligand>
</feature>
<feature type="binding site" evidence="1">
    <location>
        <position position="335"/>
    </location>
    <ligand>
        <name>Mg(2+)</name>
        <dbReference type="ChEBI" id="CHEBI:18420"/>
    </ligand>
</feature>
<reference key="1">
    <citation type="submission" date="2006-06" db="EMBL/GenBank/DDBJ databases">
        <title>Complete sequence of chromosome of Mycobacterium sp. MCS.</title>
        <authorList>
            <consortium name="US DOE Joint Genome Institute"/>
            <person name="Copeland A."/>
            <person name="Lucas S."/>
            <person name="Lapidus A."/>
            <person name="Barry K."/>
            <person name="Detter J.C."/>
            <person name="Glavina del Rio T."/>
            <person name="Hammon N."/>
            <person name="Israni S."/>
            <person name="Dalin E."/>
            <person name="Tice H."/>
            <person name="Pitluck S."/>
            <person name="Martinez M."/>
            <person name="Schmutz J."/>
            <person name="Larimer F."/>
            <person name="Land M."/>
            <person name="Hauser L."/>
            <person name="Kyrpides N."/>
            <person name="Kim E."/>
            <person name="Miller C.D."/>
            <person name="Hughes J.E."/>
            <person name="Anderson A.J."/>
            <person name="Sims R.C."/>
            <person name="Richardson P."/>
        </authorList>
    </citation>
    <scope>NUCLEOTIDE SEQUENCE [LARGE SCALE GENOMIC DNA]</scope>
    <source>
        <strain>MCS</strain>
    </source>
</reference>